<protein>
    <recommendedName>
        <fullName evidence="1">5'-nucleotidase SurE</fullName>
        <ecNumber evidence="1">3.1.3.5</ecNumber>
    </recommendedName>
    <alternativeName>
        <fullName evidence="1">Nucleoside 5'-monophosphate phosphohydrolase</fullName>
    </alternativeName>
</protein>
<proteinExistence type="inferred from homology"/>
<reference key="1">
    <citation type="journal article" date="1997" name="J. Bacteriol.">
        <title>Complete genome sequence of Methanobacterium thermoautotrophicum deltaH: functional analysis and comparative genomics.</title>
        <authorList>
            <person name="Smith D.R."/>
            <person name="Doucette-Stamm L.A."/>
            <person name="Deloughery C."/>
            <person name="Lee H.-M."/>
            <person name="Dubois J."/>
            <person name="Aldredge T."/>
            <person name="Bashirzadeh R."/>
            <person name="Blakely D."/>
            <person name="Cook R."/>
            <person name="Gilbert K."/>
            <person name="Harrison D."/>
            <person name="Hoang L."/>
            <person name="Keagle P."/>
            <person name="Lumm W."/>
            <person name="Pothier B."/>
            <person name="Qiu D."/>
            <person name="Spadafora R."/>
            <person name="Vicare R."/>
            <person name="Wang Y."/>
            <person name="Wierzbowski J."/>
            <person name="Gibson R."/>
            <person name="Jiwani N."/>
            <person name="Caruso A."/>
            <person name="Bush D."/>
            <person name="Safer H."/>
            <person name="Patwell D."/>
            <person name="Prabhakar S."/>
            <person name="McDougall S."/>
            <person name="Shimer G."/>
            <person name="Goyal A."/>
            <person name="Pietrovski S."/>
            <person name="Church G.M."/>
            <person name="Daniels C.J."/>
            <person name="Mao J.-I."/>
            <person name="Rice P."/>
            <person name="Noelling J."/>
            <person name="Reeve J.N."/>
        </authorList>
    </citation>
    <scope>NUCLEOTIDE SEQUENCE [LARGE SCALE GENOMIC DNA]</scope>
    <source>
        <strain>ATCC 29096 / DSM 1053 / JCM 10044 / NBRC 100330 / Delta H</strain>
    </source>
</reference>
<feature type="chain" id="PRO_0000111867" description="5'-nucleotidase SurE">
    <location>
        <begin position="1"/>
        <end position="262"/>
    </location>
</feature>
<feature type="binding site" evidence="1">
    <location>
        <position position="8"/>
    </location>
    <ligand>
        <name>a divalent metal cation</name>
        <dbReference type="ChEBI" id="CHEBI:60240"/>
    </ligand>
</feature>
<feature type="binding site" evidence="1">
    <location>
        <position position="9"/>
    </location>
    <ligand>
        <name>a divalent metal cation</name>
        <dbReference type="ChEBI" id="CHEBI:60240"/>
    </ligand>
</feature>
<feature type="binding site" evidence="1">
    <location>
        <position position="39"/>
    </location>
    <ligand>
        <name>a divalent metal cation</name>
        <dbReference type="ChEBI" id="CHEBI:60240"/>
    </ligand>
</feature>
<feature type="binding site" evidence="1">
    <location>
        <position position="95"/>
    </location>
    <ligand>
        <name>a divalent metal cation</name>
        <dbReference type="ChEBI" id="CHEBI:60240"/>
    </ligand>
</feature>
<name>SURE_METTH</name>
<dbReference type="EC" id="3.1.3.5" evidence="1"/>
<dbReference type="EMBL" id="AE000666">
    <property type="protein sequence ID" value="AAB85910.1"/>
    <property type="molecule type" value="Genomic_DNA"/>
</dbReference>
<dbReference type="PIR" id="A69058">
    <property type="entry name" value="A69058"/>
</dbReference>
<dbReference type="SMR" id="O27484"/>
<dbReference type="FunCoup" id="O27484">
    <property type="interactions" value="29"/>
</dbReference>
<dbReference type="STRING" id="187420.MTH_1435"/>
<dbReference type="PaxDb" id="187420-MTH_1435"/>
<dbReference type="EnsemblBacteria" id="AAB85910">
    <property type="protein sequence ID" value="AAB85910"/>
    <property type="gene ID" value="MTH_1435"/>
</dbReference>
<dbReference type="KEGG" id="mth:MTH_1435"/>
<dbReference type="PATRIC" id="fig|187420.15.peg.1397"/>
<dbReference type="HOGENOM" id="CLU_045192_1_3_2"/>
<dbReference type="InParanoid" id="O27484"/>
<dbReference type="Proteomes" id="UP000005223">
    <property type="component" value="Chromosome"/>
</dbReference>
<dbReference type="GO" id="GO:0005737">
    <property type="term" value="C:cytoplasm"/>
    <property type="evidence" value="ECO:0007669"/>
    <property type="project" value="UniProtKB-SubCell"/>
</dbReference>
<dbReference type="GO" id="GO:0008253">
    <property type="term" value="F:5'-nucleotidase activity"/>
    <property type="evidence" value="ECO:0007669"/>
    <property type="project" value="UniProtKB-UniRule"/>
</dbReference>
<dbReference type="GO" id="GO:0046872">
    <property type="term" value="F:metal ion binding"/>
    <property type="evidence" value="ECO:0007669"/>
    <property type="project" value="UniProtKB-UniRule"/>
</dbReference>
<dbReference type="GO" id="GO:0000166">
    <property type="term" value="F:nucleotide binding"/>
    <property type="evidence" value="ECO:0007669"/>
    <property type="project" value="UniProtKB-KW"/>
</dbReference>
<dbReference type="Gene3D" id="3.40.1210.10">
    <property type="entry name" value="Survival protein SurE-like phosphatase/nucleotidase"/>
    <property type="match status" value="1"/>
</dbReference>
<dbReference type="HAMAP" id="MF_00060">
    <property type="entry name" value="SurE"/>
    <property type="match status" value="1"/>
</dbReference>
<dbReference type="InterPro" id="IPR030048">
    <property type="entry name" value="SurE"/>
</dbReference>
<dbReference type="InterPro" id="IPR002828">
    <property type="entry name" value="SurE-like_Pase/nucleotidase"/>
</dbReference>
<dbReference type="InterPro" id="IPR036523">
    <property type="entry name" value="SurE-like_sf"/>
</dbReference>
<dbReference type="NCBIfam" id="NF001491">
    <property type="entry name" value="PRK00346.2-1"/>
    <property type="match status" value="1"/>
</dbReference>
<dbReference type="NCBIfam" id="TIGR00087">
    <property type="entry name" value="surE"/>
    <property type="match status" value="1"/>
</dbReference>
<dbReference type="PANTHER" id="PTHR30457">
    <property type="entry name" value="5'-NUCLEOTIDASE SURE"/>
    <property type="match status" value="1"/>
</dbReference>
<dbReference type="PANTHER" id="PTHR30457:SF0">
    <property type="entry name" value="PHOSPHATASE, PUTATIVE (AFU_ORTHOLOGUE AFUA_4G01070)-RELATED"/>
    <property type="match status" value="1"/>
</dbReference>
<dbReference type="Pfam" id="PF01975">
    <property type="entry name" value="SurE"/>
    <property type="match status" value="1"/>
</dbReference>
<dbReference type="SUPFAM" id="SSF64167">
    <property type="entry name" value="SurE-like"/>
    <property type="match status" value="1"/>
</dbReference>
<gene>
    <name evidence="1" type="primary">surE</name>
    <name type="ordered locus">MTH_1435</name>
</gene>
<sequence>MKILITNDDGVNSSGIIAARRAVEDLGETIIVAPATQQSGIGHALTLFEPVRVSEVTLRDGSGAYAVSGTHTDAVIIGIFELMDEKPDLVISGINMGENLGKSELTTSGTIGAAMEAAVHGVPSLAVSLQVRRGDIKFHDGHVDVDFSLAAELTGRVASRILRRGLPEGVDFLNLNVPSHPASDEIRITRLGDRMYNVHIKKRLDPRGRPYYWIDGDPAGTDFRVQMSTHLRLKTPPPSPPYHSTAQQALTQWRAGLIRARN</sequence>
<evidence type="ECO:0000255" key="1">
    <source>
        <dbReference type="HAMAP-Rule" id="MF_00060"/>
    </source>
</evidence>
<accession>O27484</accession>
<organism>
    <name type="scientific">Methanothermobacter thermautotrophicus (strain ATCC 29096 / DSM 1053 / JCM 10044 / NBRC 100330 / Delta H)</name>
    <name type="common">Methanobacterium thermoautotrophicum</name>
    <dbReference type="NCBI Taxonomy" id="187420"/>
    <lineage>
        <taxon>Archaea</taxon>
        <taxon>Methanobacteriati</taxon>
        <taxon>Methanobacteriota</taxon>
        <taxon>Methanomada group</taxon>
        <taxon>Methanobacteria</taxon>
        <taxon>Methanobacteriales</taxon>
        <taxon>Methanobacteriaceae</taxon>
        <taxon>Methanothermobacter</taxon>
    </lineage>
</organism>
<keyword id="KW-0963">Cytoplasm</keyword>
<keyword id="KW-0378">Hydrolase</keyword>
<keyword id="KW-0479">Metal-binding</keyword>
<keyword id="KW-0547">Nucleotide-binding</keyword>
<keyword id="KW-1185">Reference proteome</keyword>
<comment type="function">
    <text evidence="1">Nucleotidase that shows phosphatase activity on nucleoside 5'-monophosphates.</text>
</comment>
<comment type="catalytic activity">
    <reaction evidence="1">
        <text>a ribonucleoside 5'-phosphate + H2O = a ribonucleoside + phosphate</text>
        <dbReference type="Rhea" id="RHEA:12484"/>
        <dbReference type="ChEBI" id="CHEBI:15377"/>
        <dbReference type="ChEBI" id="CHEBI:18254"/>
        <dbReference type="ChEBI" id="CHEBI:43474"/>
        <dbReference type="ChEBI" id="CHEBI:58043"/>
        <dbReference type="EC" id="3.1.3.5"/>
    </reaction>
</comment>
<comment type="cofactor">
    <cofactor evidence="1">
        <name>a divalent metal cation</name>
        <dbReference type="ChEBI" id="CHEBI:60240"/>
    </cofactor>
    <text evidence="1">Binds 1 divalent metal cation per subunit.</text>
</comment>
<comment type="subcellular location">
    <subcellularLocation>
        <location evidence="1">Cytoplasm</location>
    </subcellularLocation>
</comment>
<comment type="similarity">
    <text evidence="1">Belongs to the SurE nucleotidase family.</text>
</comment>